<feature type="chain" id="PRO_0000041039" description="Outer capsid protein VP4" evidence="1">
    <location>
        <begin position="1"/>
        <end position="776"/>
    </location>
</feature>
<feature type="chain" id="PRO_0000041040" description="Outer capsid protein VP8*" evidence="1">
    <location>
        <begin position="1"/>
        <end position="231"/>
    </location>
</feature>
<feature type="chain" id="PRO_0000041041" description="Outer capsid protein VP5*" evidence="1">
    <location>
        <begin position="248"/>
        <end position="776"/>
    </location>
</feature>
<feature type="region of interest" description="Spike head" evidence="1">
    <location>
        <begin position="65"/>
        <end position="224"/>
    </location>
</feature>
<feature type="region of interest" description="Spike body and stalk (antigen domain)" evidence="1">
    <location>
        <begin position="248"/>
        <end position="479"/>
    </location>
</feature>
<feature type="region of interest" description="Hydrophobic; possible role in virus entry into host cell" evidence="1">
    <location>
        <begin position="389"/>
        <end position="409"/>
    </location>
</feature>
<feature type="region of interest" description="Spike foot" evidence="1">
    <location>
        <begin position="510"/>
        <end position="776"/>
    </location>
</feature>
<feature type="coiled-coil region" evidence="1">
    <location>
        <begin position="484"/>
        <end position="511"/>
    </location>
</feature>
<feature type="short sequence motif" description="DGE motif; interaction with ITGA2/ITGB1 heterodimer" evidence="1">
    <location>
        <begin position="308"/>
        <end position="310"/>
    </location>
</feature>
<feature type="short sequence motif" description="YGL motif; interaction with ITGA4" evidence="1">
    <location>
        <begin position="448"/>
        <end position="450"/>
    </location>
</feature>
<feature type="short sequence motif" description="KID motif; interaction with HSPA8" evidence="1">
    <location>
        <begin position="644"/>
        <end position="646"/>
    </location>
</feature>
<feature type="site" description="Binding to sialic acid" evidence="1">
    <location>
        <position position="101"/>
    </location>
</feature>
<feature type="site" description="Binding to sialic acid" evidence="1">
    <location>
        <position position="190"/>
    </location>
</feature>
<feature type="site" description="Cleavage" evidence="1">
    <location>
        <begin position="231"/>
        <end position="232"/>
    </location>
</feature>
<feature type="site" description="Cleavage" evidence="1">
    <location>
        <begin position="241"/>
        <end position="242"/>
    </location>
</feature>
<feature type="site" description="Cleavage; associated with enhancement of infectivity" evidence="1">
    <location>
        <begin position="247"/>
        <end position="248"/>
    </location>
</feature>
<feature type="disulfide bond" evidence="1">
    <location>
        <begin position="203"/>
        <end position="216"/>
    </location>
</feature>
<feature type="disulfide bond" evidence="1">
    <location>
        <begin position="318"/>
        <end position="380"/>
    </location>
</feature>
<dbReference type="EMBL" id="D14723">
    <property type="protein sequence ID" value="BAA03543.1"/>
    <property type="molecule type" value="mRNA"/>
</dbReference>
<dbReference type="SMR" id="Q07416"/>
<dbReference type="GO" id="GO:0044172">
    <property type="term" value="C:host cell endoplasmic reticulum-Golgi intermediate compartment"/>
    <property type="evidence" value="ECO:0007669"/>
    <property type="project" value="UniProtKB-SubCell"/>
</dbReference>
<dbReference type="GO" id="GO:0020002">
    <property type="term" value="C:host cell plasma membrane"/>
    <property type="evidence" value="ECO:0007669"/>
    <property type="project" value="UniProtKB-SubCell"/>
</dbReference>
<dbReference type="GO" id="GO:0044168">
    <property type="term" value="C:host cell rough endoplasmic reticulum"/>
    <property type="evidence" value="ECO:0007669"/>
    <property type="project" value="UniProtKB-SubCell"/>
</dbReference>
<dbReference type="GO" id="GO:0044163">
    <property type="term" value="C:host cytoskeleton"/>
    <property type="evidence" value="ECO:0007669"/>
    <property type="project" value="UniProtKB-SubCell"/>
</dbReference>
<dbReference type="GO" id="GO:0016020">
    <property type="term" value="C:membrane"/>
    <property type="evidence" value="ECO:0007669"/>
    <property type="project" value="UniProtKB-KW"/>
</dbReference>
<dbReference type="GO" id="GO:0039624">
    <property type="term" value="C:viral outer capsid"/>
    <property type="evidence" value="ECO:0007669"/>
    <property type="project" value="UniProtKB-UniRule"/>
</dbReference>
<dbReference type="GO" id="GO:0039665">
    <property type="term" value="P:permeabilization of host organelle membrane involved in viral entry into host cell"/>
    <property type="evidence" value="ECO:0007669"/>
    <property type="project" value="UniProtKB-UniRule"/>
</dbReference>
<dbReference type="GO" id="GO:0019062">
    <property type="term" value="P:virion attachment to host cell"/>
    <property type="evidence" value="ECO:0007669"/>
    <property type="project" value="UniProtKB-UniRule"/>
</dbReference>
<dbReference type="Gene3D" id="1.20.5.170">
    <property type="match status" value="1"/>
</dbReference>
<dbReference type="Gene3D" id="2.60.120.200">
    <property type="match status" value="1"/>
</dbReference>
<dbReference type="HAMAP" id="MF_04132">
    <property type="entry name" value="Rota_A_VP4"/>
    <property type="match status" value="1"/>
</dbReference>
<dbReference type="HAMAP" id="MF_04125">
    <property type="entry name" value="Rota_VP4"/>
    <property type="match status" value="1"/>
</dbReference>
<dbReference type="InterPro" id="IPR013320">
    <property type="entry name" value="ConA-like_dom_sf"/>
</dbReference>
<dbReference type="InterPro" id="IPR042546">
    <property type="entry name" value="Rota_A_VP4"/>
</dbReference>
<dbReference type="InterPro" id="IPR035330">
    <property type="entry name" value="Rota_VP4_MID"/>
</dbReference>
<dbReference type="InterPro" id="IPR038017">
    <property type="entry name" value="Rota_VP4_MID_sf"/>
</dbReference>
<dbReference type="InterPro" id="IPR000416">
    <property type="entry name" value="VP4_concanavalin-like"/>
</dbReference>
<dbReference type="InterPro" id="IPR035329">
    <property type="entry name" value="VP4_helical"/>
</dbReference>
<dbReference type="Pfam" id="PF17477">
    <property type="entry name" value="Rota_VP4_MID"/>
    <property type="match status" value="1"/>
</dbReference>
<dbReference type="Pfam" id="PF00426">
    <property type="entry name" value="VP4_haemagglut"/>
    <property type="match status" value="1"/>
</dbReference>
<dbReference type="Pfam" id="PF17478">
    <property type="entry name" value="VP4_helical"/>
    <property type="match status" value="1"/>
</dbReference>
<dbReference type="SUPFAM" id="SSF49899">
    <property type="entry name" value="Concanavalin A-like lectins/glucanases"/>
    <property type="match status" value="1"/>
</dbReference>
<dbReference type="SUPFAM" id="SSF111379">
    <property type="entry name" value="VP4 membrane interaction domain"/>
    <property type="match status" value="1"/>
</dbReference>
<reference key="1">
    <citation type="journal article" date="1993" name="Res. Virol.">
        <title>The VP4 gene sequence of a haemagglutinating strain of feline rotavirus.</title>
        <authorList>
            <person name="Isegawa Y."/>
            <person name="Mochizuki M."/>
            <person name="Nakagomi T."/>
            <person name="Ueda S."/>
            <person name="Nakagomi O."/>
        </authorList>
    </citation>
    <scope>NUCLEOTIDE SEQUENCE [MRNA]</scope>
</reference>
<reference key="2">
    <citation type="journal article" date="2006" name="Glycoconj. J.">
        <title>Role of sialic acids in rotavirus infection.</title>
        <authorList>
            <person name="Isa P."/>
            <person name="Arias C.F."/>
            <person name="Lopez S."/>
        </authorList>
    </citation>
    <scope>REVIEW</scope>
</reference>
<protein>
    <recommendedName>
        <fullName evidence="1">Outer capsid protein VP4</fullName>
    </recommendedName>
    <alternativeName>
        <fullName evidence="1">Hemagglutinin</fullName>
    </alternativeName>
    <component>
        <recommendedName>
            <fullName evidence="1">Outer capsid protein VP8*</fullName>
        </recommendedName>
    </component>
    <component>
        <recommendedName>
            <fullName evidence="1">Outer capsid protein VP5*</fullName>
        </recommendedName>
    </component>
</protein>
<comment type="function">
    <molecule>Outer capsid protein VP4</molecule>
    <text evidence="1">Spike-forming protein that mediates virion attachment to the host epithelial cell receptors and plays a major role in cell penetration, determination of host range restriction and virulence. Rotavirus attachment and entry into the host cell probably involves multiple sequential contacts between the outer capsid proteins VP4 and VP7, and the cell receptors. It is subsequently lost, together with VP7, following virus entry into the host cell. Following entry into the host cell, low intracellular or intravesicular Ca(2+) concentration probably causes the calcium-stabilized VP7 trimers to dissociate from the virion. This step is probably necessary for the membrane-disrupting entry step and the release of VP4, which is locked onto the virion by VP7. During the virus exit from the host cell, VP4 seems to be required to target the newly formed virions to the host cell lipid rafts.</text>
</comment>
<comment type="function">
    <molecule>Outer capsid protein VP5*</molecule>
    <text evidence="1">Forms the spike 'foot' and 'body' and acts as a membrane permeabilization protein that mediates release of viral particles from endosomal compartments into the cytoplasm. During entry, the part of VP5* that protrudes from the virus folds back on itself and reorganizes from a local dimer to a trimer. This reorganization may be linked to membrane penetration by exposing VP5* hydrophobic region. In integrin-dependent strains, VP5* targets the integrin heterodimer ITGA2/ITGB1 for cell attachment.</text>
</comment>
<comment type="function">
    <molecule>Outer capsid protein VP8*</molecule>
    <text evidence="1">Forms the head of the spikes and mediates the recognition of specific host cell surface glycans. It is the viral hemagglutinin and an important target of neutralizing antibodies. In sialic acid-dependent strains, VP8* binds to host cell sialic acid, most probably a ganglioside, providing the initial contact. In some other strains, VP8* mediates the attachment to histo-blood group antigens (HBGAs) for viral entry.</text>
</comment>
<comment type="subunit">
    <molecule>Outer capsid protein VP4</molecule>
    <text evidence="1">Homotrimer. VP4 adopts a dimeric appearance above the capsid surface, while forming a trimeric base anchored inside the capsid layer. Only hints of the third molecule are observed above the capsid surface. It probably performs a series of molecular rearrangements during viral entry. Prior to trypsin cleavage, it is flexible. The priming trypsin cleavage triggers its rearrangement into rigid spikes with approximate two-fold symmetry of their protruding parts. After an unknown second triggering event, cleaved VP4 may undergo another rearrangement, in which two VP5* subunits fold back on themselves and join a third subunit to form a tightly associated trimer, shaped like a folded umbrella. Interacts with VP6. Interacts with VP7.</text>
</comment>
<comment type="subunit">
    <molecule>Outer capsid protein VP5*</molecule>
    <text evidence="1">Homotrimer. The trimer is coiled-coil stabilized by its C-terminus, however, its N-terminus, known as antigen domain or 'body', seems to be flexible allowing it to self-associate either as a dimer or a trimer.</text>
</comment>
<comment type="subcellular location">
    <molecule>Outer capsid protein VP4</molecule>
    <subcellularLocation>
        <location evidence="1">Virion</location>
    </subcellularLocation>
    <subcellularLocation>
        <location evidence="1">Host rough endoplasmic reticulum</location>
    </subcellularLocation>
    <subcellularLocation>
        <location evidence="1">Host cell membrane</location>
    </subcellularLocation>
    <subcellularLocation>
        <location evidence="1">Host cytoplasm</location>
        <location evidence="1">Host cytoskeleton</location>
    </subcellularLocation>
    <subcellularLocation>
        <location evidence="1">Host endoplasmic reticulum-Golgi intermediate compartment</location>
    </subcellularLocation>
    <text evidence="1">The outer layer contains 180 copies of VP4, grouped as 60 dimers. Immature double-layered particles assembled in the cytoplasm bud across the membrane of the endoplasmic reticulum, acquiring during this process a transient lipid membrane that is modified with the ER resident viral glycoproteins NSP4 and VP7; these enveloped particles also contain VP4. As the particles move towards the interior of the ER cisternae, the transient lipid membrane and the non-structural protein NSP4 are lost, while the virus surface proteins VP4 and VP7 rearrange to form the outermost virus protein layer, yielding mature infectious triple-layered particles. VP4 also seems to associate with lipid rafts of the host cell membrane probably for the exit of the virus from the infected cell by an alternate pathway.</text>
</comment>
<comment type="subcellular location">
    <molecule>Outer capsid protein VP8*</molecule>
    <subcellularLocation>
        <location evidence="1">Virion</location>
    </subcellularLocation>
    <text evidence="1">Outer capsid protein.</text>
</comment>
<comment type="subcellular location">
    <molecule>Outer capsid protein VP5*</molecule>
    <subcellularLocation>
        <location evidence="1">Virion</location>
    </subcellularLocation>
    <text evidence="1">Outer capsid protein.</text>
</comment>
<comment type="domain">
    <molecule>Outer capsid protein VP4</molecule>
    <text evidence="1">The VP4 spike is divided into a foot, a stalk and body, and a head.</text>
</comment>
<comment type="PTM">
    <molecule>Outer capsid protein VP4</molecule>
    <text evidence="1">Proteolytic cleavage by trypsin results in activation of VP4 functions and greatly increases infectivity. The penetration into the host cell is dependent on trypsin treatment of VP4. It produces two peptides, VP5* and VP8* that remain associated with the virion. Cleavage of VP4 by trypsin probably occurs in vivo in the lumen of the intestine prior to infection of enterocytes. Trypsin seems to be incorporated into the three-layered viral particles but remains inactive as long as the viral outer capsid is intact and would only be activated upon the solubilization of the latter.</text>
</comment>
<comment type="miscellaneous">
    <text evidence="1">In group A rotaviruses, VP4 defines the P serotype.</text>
</comment>
<comment type="miscellaneous">
    <text evidence="1">Some rotavirus strains are neuraminidase-sensitive and require sialic acid to attach to the cell surface. Some rotavirus strains are integrin-dependent. Some rotavirus strains depend on ganglioside for their entry into the host cell. Hsp70 also seems to be involved in the entry of some strains.</text>
</comment>
<comment type="miscellaneous">
    <text evidence="1 2">This strain probably uses sialic acid to attach to the host cell.</text>
</comment>
<comment type="similarity">
    <text evidence="1">Belongs to the rotavirus VP4 family.</text>
</comment>
<accession>Q07416</accession>
<organism>
    <name type="scientific">Rotavirus A (isolate RVA/Cat/Japan/FRV64/1989/G3P5B[3])</name>
    <name type="common">RV-A</name>
    <dbReference type="NCBI Taxonomy" id="39010"/>
    <lineage>
        <taxon>Viruses</taxon>
        <taxon>Riboviria</taxon>
        <taxon>Orthornavirae</taxon>
        <taxon>Duplornaviricota</taxon>
        <taxon>Resentoviricetes</taxon>
        <taxon>Reovirales</taxon>
        <taxon>Sedoreoviridae</taxon>
        <taxon>Rotavirus</taxon>
        <taxon>Feline rotavirus</taxon>
    </lineage>
</organism>
<name>VP4_ROTF6</name>
<evidence type="ECO:0000255" key="1">
    <source>
        <dbReference type="HAMAP-Rule" id="MF_04132"/>
    </source>
</evidence>
<evidence type="ECO:0000303" key="2">
    <source>
    </source>
</evidence>
<proteinExistence type="evidence at transcript level"/>
<sequence>MASLIYRQLLTNSYTVNLSDEIQEIGSTKTQNTTINPGPFAQTGYAPVNWGPGETNDSTTIEPVLDGPYQPTSFNPPVGYWMLLSPTTAGVIVEGTNNTDRWLATILIEPNVTSQQRTYTIFGVQEQITVENTSQTQWRFVDVSKTTQNGSYSQYGPLLSTPKLYAVMKYGGRIHTYSGQTPNATTGYYSATNYDSVNMTTFCDFYIIPRSEESKCTEYINNGLPPIQNTRNIVPLALSARNVISLKAQSNEDIVVSKTSLWKEMQYNRDITIRFKFANSIVKSGGLGYKWSEISFKPANYQYTYMRDGEEVTAHTTCSVNGMNDFSFNGGSLPTDFVISRYEVIKENSYVYIDYWDDSQAFRNMVYVRSLAANLNSVTCTGGDYNFALPVGQWPYMTGGAVSLHSAGVTLSTQFTDFVSLNSLRFRFRLAVEEPSFAIMRTRVSGLYGLPAANPNNGREYYEIAGRFSLISLVPSNDNYQTPIANSVTVRQDLERQLGELREEFNALSQEIAMSQLIDLALLPLDMFSMFSGIKSTIDAAKSIATNVMKKFKRSSLASSVSILTDSLSDAASSVSRGSSIRSVGSSVSAWTDVSTQITDVSSSVSSISTQTSTISRRLRLKEMATQTEGMNFDDISAAVLKTKIDKSVQISPTTLPDIVTEASEKFIPNRAYRVINNDEVFEAGTDGRFFAYRVDTFEEIPFDVQKFADLVTDSPVISAIIDFKTLKNLNDNYGIGKQQAFNLLRSDPRVLREFINQNNPIIRNRIEQLIMQCRL</sequence>
<keyword id="KW-0167">Capsid protein</keyword>
<keyword id="KW-0175">Coiled coil</keyword>
<keyword id="KW-1015">Disulfide bond</keyword>
<keyword id="KW-0348">Hemagglutinin</keyword>
<keyword id="KW-1032">Host cell membrane</keyword>
<keyword id="KW-1035">Host cytoplasm</keyword>
<keyword id="KW-1037">Host cytoskeleton</keyword>
<keyword id="KW-1038">Host endoplasmic reticulum</keyword>
<keyword id="KW-1043">Host membrane</keyword>
<keyword id="KW-0945">Host-virus interaction</keyword>
<keyword id="KW-0472">Membrane</keyword>
<keyword id="KW-1152">Outer capsid protein</keyword>
<keyword id="KW-1161">Viral attachment to host cell</keyword>
<keyword id="KW-1162">Viral penetration into host cytoplasm</keyword>
<keyword id="KW-1173">Viral penetration via permeabilization of host membrane</keyword>
<keyword id="KW-0946">Virion</keyword>
<keyword id="KW-1160">Virus entry into host cell</keyword>
<organismHost>
    <name type="scientific">Felis catus</name>
    <name type="common">Cat</name>
    <name type="synonym">Felis silvestris catus</name>
    <dbReference type="NCBI Taxonomy" id="9685"/>
</organismHost>